<reference key="1">
    <citation type="journal article" date="2006" name="PLoS Genet.">
        <title>Comparative genomics of emerging human ehrlichiosis agents.</title>
        <authorList>
            <person name="Dunning Hotopp J.C."/>
            <person name="Lin M."/>
            <person name="Madupu R."/>
            <person name="Crabtree J."/>
            <person name="Angiuoli S.V."/>
            <person name="Eisen J.A."/>
            <person name="Seshadri R."/>
            <person name="Ren Q."/>
            <person name="Wu M."/>
            <person name="Utterback T.R."/>
            <person name="Smith S."/>
            <person name="Lewis M."/>
            <person name="Khouri H."/>
            <person name="Zhang C."/>
            <person name="Niu H."/>
            <person name="Lin Q."/>
            <person name="Ohashi N."/>
            <person name="Zhi N."/>
            <person name="Nelson W.C."/>
            <person name="Brinkac L.M."/>
            <person name="Dodson R.J."/>
            <person name="Rosovitz M.J."/>
            <person name="Sundaram J.P."/>
            <person name="Daugherty S.C."/>
            <person name="Davidsen T."/>
            <person name="Durkin A.S."/>
            <person name="Gwinn M.L."/>
            <person name="Haft D.H."/>
            <person name="Selengut J.D."/>
            <person name="Sullivan S.A."/>
            <person name="Zafar N."/>
            <person name="Zhou L."/>
            <person name="Benahmed F."/>
            <person name="Forberger H."/>
            <person name="Halpin R."/>
            <person name="Mulligan S."/>
            <person name="Robinson J."/>
            <person name="White O."/>
            <person name="Rikihisa Y."/>
            <person name="Tettelin H."/>
        </authorList>
    </citation>
    <scope>NUCLEOTIDE SEQUENCE [LARGE SCALE GENOMIC DNA]</scope>
    <source>
        <strain>ATCC CRL-10679 / Arkansas</strain>
    </source>
</reference>
<gene>
    <name evidence="1" type="primary">rpsK</name>
    <name type="ordered locus">ECH_0431</name>
</gene>
<feature type="chain" id="PRO_0000294749" description="Small ribosomal subunit protein uS11">
    <location>
        <begin position="1"/>
        <end position="126"/>
    </location>
</feature>
<sequence>MSVVYKKKKRNVVVGVVYIHATYNNIIVTVTDQQGHSLICTSAGACGFKGSKKATPYAAQETASHAVKTVVEQNGMKTVSIKVSGPGAGRESAIRAVQACNLNVTSIKDTTKLPHNGCKLPGRRRV</sequence>
<name>RS11_EHRCR</name>
<accession>Q2GH34</accession>
<comment type="function">
    <text evidence="1">Located on the platform of the 30S subunit, it bridges several disparate RNA helices of the 16S rRNA. Forms part of the Shine-Dalgarno cleft in the 70S ribosome.</text>
</comment>
<comment type="subunit">
    <text evidence="1">Part of the 30S ribosomal subunit. Interacts with proteins S7 and S18. Binds to IF-3.</text>
</comment>
<comment type="similarity">
    <text evidence="1">Belongs to the universal ribosomal protein uS11 family.</text>
</comment>
<dbReference type="EMBL" id="CP000236">
    <property type="protein sequence ID" value="ABD44739.1"/>
    <property type="molecule type" value="Genomic_DNA"/>
</dbReference>
<dbReference type="RefSeq" id="WP_011452598.1">
    <property type="nucleotide sequence ID" value="NC_007799.1"/>
</dbReference>
<dbReference type="SMR" id="Q2GH34"/>
<dbReference type="STRING" id="205920.ECH_0431"/>
<dbReference type="KEGG" id="ech:ECH_0431"/>
<dbReference type="eggNOG" id="COG0100">
    <property type="taxonomic scope" value="Bacteria"/>
</dbReference>
<dbReference type="HOGENOM" id="CLU_072439_5_0_5"/>
<dbReference type="OrthoDB" id="9806415at2"/>
<dbReference type="Proteomes" id="UP000008320">
    <property type="component" value="Chromosome"/>
</dbReference>
<dbReference type="GO" id="GO:1990904">
    <property type="term" value="C:ribonucleoprotein complex"/>
    <property type="evidence" value="ECO:0007669"/>
    <property type="project" value="UniProtKB-KW"/>
</dbReference>
<dbReference type="GO" id="GO:0005840">
    <property type="term" value="C:ribosome"/>
    <property type="evidence" value="ECO:0007669"/>
    <property type="project" value="UniProtKB-KW"/>
</dbReference>
<dbReference type="GO" id="GO:0019843">
    <property type="term" value="F:rRNA binding"/>
    <property type="evidence" value="ECO:0007669"/>
    <property type="project" value="UniProtKB-UniRule"/>
</dbReference>
<dbReference type="GO" id="GO:0003735">
    <property type="term" value="F:structural constituent of ribosome"/>
    <property type="evidence" value="ECO:0007669"/>
    <property type="project" value="InterPro"/>
</dbReference>
<dbReference type="GO" id="GO:0006412">
    <property type="term" value="P:translation"/>
    <property type="evidence" value="ECO:0007669"/>
    <property type="project" value="UniProtKB-UniRule"/>
</dbReference>
<dbReference type="Gene3D" id="3.30.420.80">
    <property type="entry name" value="Ribosomal protein S11"/>
    <property type="match status" value="1"/>
</dbReference>
<dbReference type="HAMAP" id="MF_01310">
    <property type="entry name" value="Ribosomal_uS11"/>
    <property type="match status" value="1"/>
</dbReference>
<dbReference type="InterPro" id="IPR001971">
    <property type="entry name" value="Ribosomal_uS11"/>
</dbReference>
<dbReference type="InterPro" id="IPR019981">
    <property type="entry name" value="Ribosomal_uS11_bac-type"/>
</dbReference>
<dbReference type="InterPro" id="IPR036967">
    <property type="entry name" value="Ribosomal_uS11_sf"/>
</dbReference>
<dbReference type="NCBIfam" id="NF003698">
    <property type="entry name" value="PRK05309.1"/>
    <property type="match status" value="1"/>
</dbReference>
<dbReference type="NCBIfam" id="TIGR03632">
    <property type="entry name" value="uS11_bact"/>
    <property type="match status" value="1"/>
</dbReference>
<dbReference type="PANTHER" id="PTHR11759">
    <property type="entry name" value="40S RIBOSOMAL PROTEIN S14/30S RIBOSOMAL PROTEIN S11"/>
    <property type="match status" value="1"/>
</dbReference>
<dbReference type="Pfam" id="PF00411">
    <property type="entry name" value="Ribosomal_S11"/>
    <property type="match status" value="1"/>
</dbReference>
<dbReference type="PIRSF" id="PIRSF002131">
    <property type="entry name" value="Ribosomal_S11"/>
    <property type="match status" value="1"/>
</dbReference>
<dbReference type="SUPFAM" id="SSF53137">
    <property type="entry name" value="Translational machinery components"/>
    <property type="match status" value="1"/>
</dbReference>
<evidence type="ECO:0000255" key="1">
    <source>
        <dbReference type="HAMAP-Rule" id="MF_01310"/>
    </source>
</evidence>
<evidence type="ECO:0000305" key="2"/>
<protein>
    <recommendedName>
        <fullName evidence="1">Small ribosomal subunit protein uS11</fullName>
    </recommendedName>
    <alternativeName>
        <fullName evidence="2">30S ribosomal protein S11</fullName>
    </alternativeName>
</protein>
<keyword id="KW-1185">Reference proteome</keyword>
<keyword id="KW-0687">Ribonucleoprotein</keyword>
<keyword id="KW-0689">Ribosomal protein</keyword>
<keyword id="KW-0694">RNA-binding</keyword>
<keyword id="KW-0699">rRNA-binding</keyword>
<organism>
    <name type="scientific">Ehrlichia chaffeensis (strain ATCC CRL-10679 / Arkansas)</name>
    <dbReference type="NCBI Taxonomy" id="205920"/>
    <lineage>
        <taxon>Bacteria</taxon>
        <taxon>Pseudomonadati</taxon>
        <taxon>Pseudomonadota</taxon>
        <taxon>Alphaproteobacteria</taxon>
        <taxon>Rickettsiales</taxon>
        <taxon>Anaplasmataceae</taxon>
        <taxon>Ehrlichia</taxon>
    </lineage>
</organism>
<proteinExistence type="inferred from homology"/>